<reference key="1">
    <citation type="submission" date="2006-09" db="EMBL/GenBank/DDBJ databases">
        <authorList>
            <consortium name="The Klebsiella pneumonia Genome Sequencing Project"/>
            <person name="McClelland M."/>
            <person name="Sanderson E.K."/>
            <person name="Spieth J."/>
            <person name="Clifton W.S."/>
            <person name="Latreille P."/>
            <person name="Sabo A."/>
            <person name="Pepin K."/>
            <person name="Bhonagiri V."/>
            <person name="Porwollik S."/>
            <person name="Ali J."/>
            <person name="Wilson R.K."/>
        </authorList>
    </citation>
    <scope>NUCLEOTIDE SEQUENCE [LARGE SCALE GENOMIC DNA]</scope>
    <source>
        <strain>ATCC 700721 / MGH 78578</strain>
    </source>
</reference>
<proteinExistence type="inferred from homology"/>
<name>RL24_KLEP7</name>
<organism>
    <name type="scientific">Klebsiella pneumoniae subsp. pneumoniae (strain ATCC 700721 / MGH 78578)</name>
    <dbReference type="NCBI Taxonomy" id="272620"/>
    <lineage>
        <taxon>Bacteria</taxon>
        <taxon>Pseudomonadati</taxon>
        <taxon>Pseudomonadota</taxon>
        <taxon>Gammaproteobacteria</taxon>
        <taxon>Enterobacterales</taxon>
        <taxon>Enterobacteriaceae</taxon>
        <taxon>Klebsiella/Raoultella group</taxon>
        <taxon>Klebsiella</taxon>
        <taxon>Klebsiella pneumoniae complex</taxon>
    </lineage>
</organism>
<accession>A6TEW1</accession>
<sequence length="104" mass="11316">MAAKIRRDDEVIVLTGKDKGKRGKVKNVLSSGKVIVEGINLVKKHQKPVPALNQPGGIVEKEAAIQVSNVAIFNAATGKADRVGFRFEDGKKVRFFKSNSETIK</sequence>
<keyword id="KW-0687">Ribonucleoprotein</keyword>
<keyword id="KW-0689">Ribosomal protein</keyword>
<keyword id="KW-0694">RNA-binding</keyword>
<keyword id="KW-0699">rRNA-binding</keyword>
<dbReference type="EMBL" id="CP000647">
    <property type="protein sequence ID" value="ABR79095.1"/>
    <property type="molecule type" value="Genomic_DNA"/>
</dbReference>
<dbReference type="RefSeq" id="WP_000729185.1">
    <property type="nucleotide sequence ID" value="NC_009648.1"/>
</dbReference>
<dbReference type="SMR" id="A6TEW1"/>
<dbReference type="STRING" id="272620.KPN_03708"/>
<dbReference type="jPOST" id="A6TEW1"/>
<dbReference type="PaxDb" id="272620-KPN_03708"/>
<dbReference type="EnsemblBacteria" id="ABR79095">
    <property type="protein sequence ID" value="ABR79095"/>
    <property type="gene ID" value="KPN_03708"/>
</dbReference>
<dbReference type="GeneID" id="93778678"/>
<dbReference type="KEGG" id="kpn:KPN_03708"/>
<dbReference type="HOGENOM" id="CLU_093315_2_2_6"/>
<dbReference type="Proteomes" id="UP000000265">
    <property type="component" value="Chromosome"/>
</dbReference>
<dbReference type="GO" id="GO:0005829">
    <property type="term" value="C:cytosol"/>
    <property type="evidence" value="ECO:0007669"/>
    <property type="project" value="UniProtKB-ARBA"/>
</dbReference>
<dbReference type="GO" id="GO:1990904">
    <property type="term" value="C:ribonucleoprotein complex"/>
    <property type="evidence" value="ECO:0007669"/>
    <property type="project" value="UniProtKB-KW"/>
</dbReference>
<dbReference type="GO" id="GO:0005840">
    <property type="term" value="C:ribosome"/>
    <property type="evidence" value="ECO:0007669"/>
    <property type="project" value="UniProtKB-KW"/>
</dbReference>
<dbReference type="GO" id="GO:0019843">
    <property type="term" value="F:rRNA binding"/>
    <property type="evidence" value="ECO:0007669"/>
    <property type="project" value="UniProtKB-UniRule"/>
</dbReference>
<dbReference type="GO" id="GO:0003735">
    <property type="term" value="F:structural constituent of ribosome"/>
    <property type="evidence" value="ECO:0007669"/>
    <property type="project" value="InterPro"/>
</dbReference>
<dbReference type="GO" id="GO:0006412">
    <property type="term" value="P:translation"/>
    <property type="evidence" value="ECO:0007669"/>
    <property type="project" value="UniProtKB-UniRule"/>
</dbReference>
<dbReference type="CDD" id="cd06089">
    <property type="entry name" value="KOW_RPL26"/>
    <property type="match status" value="1"/>
</dbReference>
<dbReference type="FunFam" id="2.30.30.30:FF:000004">
    <property type="entry name" value="50S ribosomal protein L24"/>
    <property type="match status" value="1"/>
</dbReference>
<dbReference type="Gene3D" id="2.30.30.30">
    <property type="match status" value="1"/>
</dbReference>
<dbReference type="HAMAP" id="MF_01326_B">
    <property type="entry name" value="Ribosomal_uL24_B"/>
    <property type="match status" value="1"/>
</dbReference>
<dbReference type="InterPro" id="IPR005824">
    <property type="entry name" value="KOW"/>
</dbReference>
<dbReference type="InterPro" id="IPR014722">
    <property type="entry name" value="Rib_uL2_dom2"/>
</dbReference>
<dbReference type="InterPro" id="IPR003256">
    <property type="entry name" value="Ribosomal_uL24"/>
</dbReference>
<dbReference type="InterPro" id="IPR005825">
    <property type="entry name" value="Ribosomal_uL24_CS"/>
</dbReference>
<dbReference type="InterPro" id="IPR041988">
    <property type="entry name" value="Ribosomal_uL24_KOW"/>
</dbReference>
<dbReference type="InterPro" id="IPR008991">
    <property type="entry name" value="Translation_prot_SH3-like_sf"/>
</dbReference>
<dbReference type="NCBIfam" id="TIGR01079">
    <property type="entry name" value="rplX_bact"/>
    <property type="match status" value="1"/>
</dbReference>
<dbReference type="PANTHER" id="PTHR12903">
    <property type="entry name" value="MITOCHONDRIAL RIBOSOMAL PROTEIN L24"/>
    <property type="match status" value="1"/>
</dbReference>
<dbReference type="Pfam" id="PF00467">
    <property type="entry name" value="KOW"/>
    <property type="match status" value="1"/>
</dbReference>
<dbReference type="Pfam" id="PF17136">
    <property type="entry name" value="ribosomal_L24"/>
    <property type="match status" value="1"/>
</dbReference>
<dbReference type="SMART" id="SM00739">
    <property type="entry name" value="KOW"/>
    <property type="match status" value="1"/>
</dbReference>
<dbReference type="SUPFAM" id="SSF50104">
    <property type="entry name" value="Translation proteins SH3-like domain"/>
    <property type="match status" value="1"/>
</dbReference>
<dbReference type="PROSITE" id="PS01108">
    <property type="entry name" value="RIBOSOMAL_L24"/>
    <property type="match status" value="1"/>
</dbReference>
<protein>
    <recommendedName>
        <fullName evidence="1">Large ribosomal subunit protein uL24</fullName>
    </recommendedName>
    <alternativeName>
        <fullName evidence="2">50S ribosomal protein L24</fullName>
    </alternativeName>
</protein>
<feature type="chain" id="PRO_1000052231" description="Large ribosomal subunit protein uL24">
    <location>
        <begin position="1"/>
        <end position="104"/>
    </location>
</feature>
<gene>
    <name evidence="1" type="primary">rplX</name>
    <name type="ordered locus">KPN78578_36710</name>
    <name type="ORF">KPN_03708</name>
</gene>
<comment type="function">
    <text evidence="1">One of two assembly initiator proteins, it binds directly to the 5'-end of the 23S rRNA, where it nucleates assembly of the 50S subunit.</text>
</comment>
<comment type="function">
    <text evidence="1">One of the proteins that surrounds the polypeptide exit tunnel on the outside of the subunit.</text>
</comment>
<comment type="subunit">
    <text evidence="1">Part of the 50S ribosomal subunit.</text>
</comment>
<comment type="similarity">
    <text evidence="1">Belongs to the universal ribosomal protein uL24 family.</text>
</comment>
<evidence type="ECO:0000255" key="1">
    <source>
        <dbReference type="HAMAP-Rule" id="MF_01326"/>
    </source>
</evidence>
<evidence type="ECO:0000305" key="2"/>